<proteinExistence type="evidence at protein level"/>
<protein>
    <recommendedName>
        <fullName>Serine/threonine-protein kinase AfsK</fullName>
        <ecNumber>2.7.11.1</ecNumber>
    </recommendedName>
</protein>
<keyword id="KW-0067">ATP-binding</keyword>
<keyword id="KW-0418">Kinase</keyword>
<keyword id="KW-0547">Nucleotide-binding</keyword>
<keyword id="KW-0597">Phosphoprotein</keyword>
<keyword id="KW-1185">Reference proteome</keyword>
<keyword id="KW-0723">Serine/threonine-protein kinase</keyword>
<keyword id="KW-0808">Transferase</keyword>
<gene>
    <name type="primary">afsK</name>
    <name type="ordered locus">SCO4423</name>
    <name type="ORF">SC6F11.21</name>
    <name type="ORF">SCD6.01</name>
</gene>
<dbReference type="EC" id="2.7.11.1"/>
<dbReference type="EMBL" id="D45382">
    <property type="protein sequence ID" value="BAA08229.2"/>
    <property type="molecule type" value="Genomic_DNA"/>
</dbReference>
<dbReference type="EMBL" id="AL939120">
    <property type="protein sequence ID" value="CAD55483.1"/>
    <property type="molecule type" value="Genomic_DNA"/>
</dbReference>
<dbReference type="RefSeq" id="NP_733637.1">
    <property type="nucleotide sequence ID" value="NC_003888.3"/>
</dbReference>
<dbReference type="RefSeq" id="WP_011029643.1">
    <property type="nucleotide sequence ID" value="NZ_VNID01000017.1"/>
</dbReference>
<dbReference type="SMR" id="P54741"/>
<dbReference type="STRING" id="100226.gene:17762068"/>
<dbReference type="iPTMnet" id="P54741"/>
<dbReference type="PaxDb" id="100226-SCO4423"/>
<dbReference type="KEGG" id="sco:SCO4423"/>
<dbReference type="PATRIC" id="fig|100226.15.peg.4492"/>
<dbReference type="eggNOG" id="COG0515">
    <property type="taxonomic scope" value="Bacteria"/>
</dbReference>
<dbReference type="eggNOG" id="COG1520">
    <property type="taxonomic scope" value="Bacteria"/>
</dbReference>
<dbReference type="HOGENOM" id="CLU_000288_135_1_11"/>
<dbReference type="InParanoid" id="P54741"/>
<dbReference type="OrthoDB" id="9762169at2"/>
<dbReference type="BRENDA" id="2.7.11.1">
    <property type="organism ID" value="5998"/>
</dbReference>
<dbReference type="Proteomes" id="UP000001973">
    <property type="component" value="Chromosome"/>
</dbReference>
<dbReference type="GO" id="GO:0005524">
    <property type="term" value="F:ATP binding"/>
    <property type="evidence" value="ECO:0007669"/>
    <property type="project" value="UniProtKB-KW"/>
</dbReference>
<dbReference type="GO" id="GO:0106310">
    <property type="term" value="F:protein serine kinase activity"/>
    <property type="evidence" value="ECO:0007669"/>
    <property type="project" value="RHEA"/>
</dbReference>
<dbReference type="GO" id="GO:0004674">
    <property type="term" value="F:protein serine/threonine kinase activity"/>
    <property type="evidence" value="ECO:0007669"/>
    <property type="project" value="UniProtKB-KW"/>
</dbReference>
<dbReference type="CDD" id="cd14014">
    <property type="entry name" value="STKc_PknB_like"/>
    <property type="match status" value="1"/>
</dbReference>
<dbReference type="FunFam" id="1.10.510.10:FF:000021">
    <property type="entry name" value="Serine/threonine protein kinase"/>
    <property type="match status" value="1"/>
</dbReference>
<dbReference type="FunFam" id="2.130.10.10:FF:001003">
    <property type="entry name" value="Serine/threonine protein kinase"/>
    <property type="match status" value="1"/>
</dbReference>
<dbReference type="FunFam" id="2.40.10.480:FF:000001">
    <property type="entry name" value="Serine/threonine protein kinase"/>
    <property type="match status" value="1"/>
</dbReference>
<dbReference type="FunFam" id="3.30.200.20:FF:000267">
    <property type="entry name" value="Serine/threonine protein kinase"/>
    <property type="match status" value="1"/>
</dbReference>
<dbReference type="Gene3D" id="2.40.10.480">
    <property type="match status" value="3"/>
</dbReference>
<dbReference type="Gene3D" id="2.40.128.630">
    <property type="match status" value="1"/>
</dbReference>
<dbReference type="Gene3D" id="3.30.200.20">
    <property type="entry name" value="Phosphorylase Kinase, domain 1"/>
    <property type="match status" value="1"/>
</dbReference>
<dbReference type="Gene3D" id="1.10.510.10">
    <property type="entry name" value="Transferase(Phosphotransferase) domain 1"/>
    <property type="match status" value="1"/>
</dbReference>
<dbReference type="Gene3D" id="2.130.10.10">
    <property type="entry name" value="YVTN repeat-like/Quinoprotein amine dehydrogenase"/>
    <property type="match status" value="1"/>
</dbReference>
<dbReference type="InterPro" id="IPR011009">
    <property type="entry name" value="Kinase-like_dom_sf"/>
</dbReference>
<dbReference type="InterPro" id="IPR018391">
    <property type="entry name" value="PQQ_b-propeller_rpt"/>
</dbReference>
<dbReference type="InterPro" id="IPR002372">
    <property type="entry name" value="PQQ_rpt_dom"/>
</dbReference>
<dbReference type="InterPro" id="IPR000719">
    <property type="entry name" value="Prot_kinase_dom"/>
</dbReference>
<dbReference type="InterPro" id="IPR017441">
    <property type="entry name" value="Protein_kinase_ATP_BS"/>
</dbReference>
<dbReference type="InterPro" id="IPR011047">
    <property type="entry name" value="Quinoprotein_ADH-like_sf"/>
</dbReference>
<dbReference type="InterPro" id="IPR008271">
    <property type="entry name" value="Ser/Thr_kinase_AS"/>
</dbReference>
<dbReference type="InterPro" id="IPR015943">
    <property type="entry name" value="WD40/YVTN_repeat-like_dom_sf"/>
</dbReference>
<dbReference type="PANTHER" id="PTHR34512">
    <property type="entry name" value="CELL SURFACE PROTEIN"/>
    <property type="match status" value="1"/>
</dbReference>
<dbReference type="PANTHER" id="PTHR34512:SF30">
    <property type="entry name" value="OUTER MEMBRANE PROTEIN ASSEMBLY FACTOR BAMB"/>
    <property type="match status" value="1"/>
</dbReference>
<dbReference type="Pfam" id="PF00069">
    <property type="entry name" value="Pkinase"/>
    <property type="match status" value="1"/>
</dbReference>
<dbReference type="Pfam" id="PF13360">
    <property type="entry name" value="PQQ_2"/>
    <property type="match status" value="3"/>
</dbReference>
<dbReference type="SMART" id="SM00564">
    <property type="entry name" value="PQQ"/>
    <property type="match status" value="9"/>
</dbReference>
<dbReference type="SMART" id="SM00220">
    <property type="entry name" value="S_TKc"/>
    <property type="match status" value="1"/>
</dbReference>
<dbReference type="SUPFAM" id="SSF56112">
    <property type="entry name" value="Protein kinase-like (PK-like)"/>
    <property type="match status" value="1"/>
</dbReference>
<dbReference type="SUPFAM" id="SSF50998">
    <property type="entry name" value="Quinoprotein alcohol dehydrogenase-like"/>
    <property type="match status" value="1"/>
</dbReference>
<dbReference type="PROSITE" id="PS00107">
    <property type="entry name" value="PROTEIN_KINASE_ATP"/>
    <property type="match status" value="1"/>
</dbReference>
<dbReference type="PROSITE" id="PS50011">
    <property type="entry name" value="PROTEIN_KINASE_DOM"/>
    <property type="match status" value="1"/>
</dbReference>
<dbReference type="PROSITE" id="PS00108">
    <property type="entry name" value="PROTEIN_KINASE_ST"/>
    <property type="match status" value="1"/>
</dbReference>
<accession>P54741</accession>
<accession>Q9F365</accession>
<accession>Q9L002</accession>
<reference key="1">
    <citation type="journal article" date="1994" name="Gene">
        <title>Phosphorylation of the AfsR protein involved in secondary metabolism in Streptomyces species by a eukaryotic-type protein kinase.</title>
        <authorList>
            <person name="Matsumoto A."/>
            <person name="Hong S.K."/>
            <person name="Ishizuka H."/>
            <person name="Horinouchi S."/>
            <person name="Beppu T."/>
        </authorList>
    </citation>
    <scope>NUCLEOTIDE SEQUENCE [GENOMIC DNA]</scope>
    <source>
        <strain>A3(2) / NRRL B-16638</strain>
    </source>
</reference>
<reference key="2">
    <citation type="journal article" date="1996" name="Gene">
        <title>The aerial mycelium-defective phenotype of Streptomyces griseus resulting from A-factor deficiency is suppressed by a Ser/Thr kinase of S. coelicolor A3(2).</title>
        <authorList>
            <person name="Ueda K."/>
            <person name="Umeyama T."/>
            <person name="Beppu T."/>
            <person name="Horinouchi S."/>
        </authorList>
    </citation>
    <scope>NUCLEOTIDE SEQUENCE [GENOMIC DNA]</scope>
    <source>
        <strain>A3(2) / NRRL B-16638</strain>
    </source>
</reference>
<reference key="3">
    <citation type="submission" date="2001-04" db="EMBL/GenBank/DDBJ databases">
        <authorList>
            <person name="Matsumoto A."/>
            <person name="Hong S."/>
            <person name="Ishizuka H."/>
            <person name="Horinouchi S."/>
            <person name="Beppu T."/>
            <person name="Umeyama T."/>
        </authorList>
    </citation>
    <scope>SEQUENCE REVISION TO 239-240</scope>
</reference>
<reference key="4">
    <citation type="journal article" date="2002" name="Nature">
        <title>Complete genome sequence of the model actinomycete Streptomyces coelicolor A3(2).</title>
        <authorList>
            <person name="Bentley S.D."/>
            <person name="Chater K.F."/>
            <person name="Cerdeno-Tarraga A.-M."/>
            <person name="Challis G.L."/>
            <person name="Thomson N.R."/>
            <person name="James K.D."/>
            <person name="Harris D.E."/>
            <person name="Quail M.A."/>
            <person name="Kieser H."/>
            <person name="Harper D."/>
            <person name="Bateman A."/>
            <person name="Brown S."/>
            <person name="Chandra G."/>
            <person name="Chen C.W."/>
            <person name="Collins M."/>
            <person name="Cronin A."/>
            <person name="Fraser A."/>
            <person name="Goble A."/>
            <person name="Hidalgo J."/>
            <person name="Hornsby T."/>
            <person name="Howarth S."/>
            <person name="Huang C.-H."/>
            <person name="Kieser T."/>
            <person name="Larke L."/>
            <person name="Murphy L.D."/>
            <person name="Oliver K."/>
            <person name="O'Neil S."/>
            <person name="Rabbinowitsch E."/>
            <person name="Rajandream M.A."/>
            <person name="Rutherford K.M."/>
            <person name="Rutter S."/>
            <person name="Seeger K."/>
            <person name="Saunders D."/>
            <person name="Sharp S."/>
            <person name="Squares R."/>
            <person name="Squares S."/>
            <person name="Taylor K."/>
            <person name="Warren T."/>
            <person name="Wietzorrek A."/>
            <person name="Woodward J.R."/>
            <person name="Barrell B.G."/>
            <person name="Parkhill J."/>
            <person name="Hopwood D.A."/>
        </authorList>
    </citation>
    <scope>NUCLEOTIDE SEQUENCE [LARGE SCALE GENOMIC DNA]</scope>
    <source>
        <strain>ATCC BAA-471 / A3(2) / M145</strain>
    </source>
</reference>
<reference key="5">
    <citation type="journal article" date="2001" name="J. Bacteriol.">
        <title>Autophosphorylation of a bacterial serine/threonine kinase, AfsK, is inhibited by KbpA, an AfsK-binding protein.</title>
        <authorList>
            <person name="Umeyama T."/>
            <person name="Horinouchi S."/>
        </authorList>
    </citation>
    <scope>INTERACTION WITH KBPA</scope>
    <scope>AUTOPHOSPHORYLATION</scope>
    <scope>MUTAGENESIS OF LYS-44</scope>
</reference>
<reference key="6">
    <citation type="journal article" date="2006" name="J. Antibiot.">
        <title>Self-activation of serine/threonine kinase AfsK on autophosphorylation at threonine-168.</title>
        <authorList>
            <person name="Tomono A."/>
            <person name="Mashiko M."/>
            <person name="Shimazu T."/>
            <person name="Inoue H."/>
            <person name="Nagasawa H."/>
            <person name="Yoshida M."/>
            <person name="Ohnishi Y."/>
            <person name="Horinouchi S."/>
        </authorList>
    </citation>
    <scope>PHOSPHORYLATION AT SER-71 AND THR-168</scope>
    <scope>MUTAGENESIS OF SER-71; SER-128; THR-168 AND THR-170</scope>
</reference>
<sequence>MVDQLTQHDPRRIGPFEVLGRLGAGGMGLVYLARSASGRRVAIKTVRTELAEDQLFRVRFTREVEAARAVSGFYTAAVVDADPRAAVPWLATAYVPAPSLEEIVNECGPMPAQAVRWLAAGVAEALQSIHGAGLVHRDLKPSNVLVVEDGPRVIDFGIASGVSNTRLTMTNVAVGTPAYMSPEQAKDSRSVTGASDVFSLGSMLVFAATGHPPFHGANPVETVFMLLREGPDLEGLPDELRPLIESCMQMEATGRPNPADLQAQLAPHLFGSGSDDSGTASAWLPERAVGLIEGRRNGRPAVKPATTAGGRGHGHGPSGARAPVHAPPLPPPPAHDPVVPAPPAHVPAVPAPVGAPDGGPVRLPGAAVPIGPGPRVADMRAAAVAAPPPESALAASWSRPRPGVNGADPAVPAPAPAPPEASPAGWRPWRFRMSNDVWGTPRVAEDLVYVTSFEVHALDVATGRRRFKTRDVAWSMAVADGRIHASDGPTLFALDAREGADLWRVQTDAWVYSLQADRGTVLTATRGGGVQAWEASAGQKLWEVTGAQTDFESPEAGAALHDGTAYVWQDARLRALDARTGDERWSYPIGDAASCGGVPVRLTQAPDGYVYVAAGTRVLALEVASGHVRWHFEAPAVFLAPPTFVPGPAVTGGGVYLADYLGTVYALDATDGRDRWRIATEARSSTDPVLVAAGHVHVGSGKGLYTLDAVTGTPKWRFQAGGDIVGAPAVAEGRIHFGSSDHLLYTLKADDGRLRWKLATGGEITGSPVVRDGIVYACSKDRCVYALDAEKGTGTARTT</sequence>
<name>AFSK_STRCO</name>
<feature type="chain" id="PRO_0000171234" description="Serine/threonine-protein kinase AfsK">
    <location>
        <begin position="1"/>
        <end position="799"/>
    </location>
</feature>
<feature type="domain" description="Protein kinase" evidence="1">
    <location>
        <begin position="16"/>
        <end position="271"/>
    </location>
</feature>
<feature type="region of interest" description="Disordered" evidence="3">
    <location>
        <begin position="295"/>
        <end position="343"/>
    </location>
</feature>
<feature type="region of interest" description="Disordered" evidence="3">
    <location>
        <begin position="393"/>
        <end position="426"/>
    </location>
</feature>
<feature type="compositionally biased region" description="Pro residues" evidence="3">
    <location>
        <begin position="325"/>
        <end position="343"/>
    </location>
</feature>
<feature type="compositionally biased region" description="Pro residues" evidence="3">
    <location>
        <begin position="411"/>
        <end position="421"/>
    </location>
</feature>
<feature type="active site" description="Proton acceptor" evidence="1 2">
    <location>
        <position position="138"/>
    </location>
</feature>
<feature type="binding site" evidence="1">
    <location>
        <begin position="22"/>
        <end position="30"/>
    </location>
    <ligand>
        <name>ATP</name>
        <dbReference type="ChEBI" id="CHEBI:30616"/>
    </ligand>
</feature>
<feature type="binding site" evidence="1">
    <location>
        <position position="44"/>
    </location>
    <ligand>
        <name>ATP</name>
        <dbReference type="ChEBI" id="CHEBI:30616"/>
    </ligand>
</feature>
<feature type="modified residue" description="Phosphoserine; by autocatalysis" evidence="5">
    <location>
        <position position="71"/>
    </location>
</feature>
<feature type="modified residue" description="Phosphothreonine; by autocatalysis" evidence="5">
    <location>
        <position position="168"/>
    </location>
</feature>
<feature type="mutagenesis site" description="No autophosphorylation. Binds KbpA." evidence="4">
    <original>K</original>
    <variation>A</variation>
    <location>
        <position position="44"/>
    </location>
</feature>
<feature type="mutagenesis site" description="No autophosphorylation." evidence="5">
    <original>S</original>
    <variation>A</variation>
    <location>
        <position position="71"/>
    </location>
</feature>
<feature type="mutagenesis site" description="No change in autophosphorylation." evidence="5">
    <original>S</original>
    <variation>A</variation>
    <location>
        <position position="128"/>
    </location>
</feature>
<feature type="mutagenesis site" description="Almost completely abolishes autophosphorylation. No enhancement of kinase activity on AfsR. Very little constitutive kinase activity." evidence="5">
    <original>T</original>
    <variation>A</variation>
    <location>
        <position position="168"/>
    </location>
</feature>
<feature type="mutagenesis site" description="Almost completely abolishes autophosphorylation. No enhancement of kinase activity on AfsR. Constitutive kinase activity." evidence="5">
    <original>T</original>
    <variation>D</variation>
    <location>
        <position position="168"/>
    </location>
</feature>
<feature type="mutagenesis site" description="Almost completely abolishes autophosphorylation. No enhancement of kinase activity on AfsR. Some constitutive kinase activity." evidence="5">
    <original>T</original>
    <variation>E</variation>
    <location>
        <position position="168"/>
    </location>
</feature>
<feature type="mutagenesis site" description="No change in autophosphorylation." evidence="5">
    <original>T</original>
    <variation>D</variation>
    <location>
        <position position="170"/>
    </location>
</feature>
<organism>
    <name type="scientific">Streptomyces coelicolor (strain ATCC BAA-471 / A3(2) / M145)</name>
    <dbReference type="NCBI Taxonomy" id="100226"/>
    <lineage>
        <taxon>Bacteria</taxon>
        <taxon>Bacillati</taxon>
        <taxon>Actinomycetota</taxon>
        <taxon>Actinomycetes</taxon>
        <taxon>Kitasatosporales</taxon>
        <taxon>Streptomycetaceae</taxon>
        <taxon>Streptomyces</taxon>
        <taxon>Streptomyces albidoflavus group</taxon>
    </lineage>
</organism>
<evidence type="ECO:0000255" key="1">
    <source>
        <dbReference type="PROSITE-ProRule" id="PRU00159"/>
    </source>
</evidence>
<evidence type="ECO:0000255" key="2">
    <source>
        <dbReference type="PROSITE-ProRule" id="PRU10027"/>
    </source>
</evidence>
<evidence type="ECO:0000256" key="3">
    <source>
        <dbReference type="SAM" id="MobiDB-lite"/>
    </source>
</evidence>
<evidence type="ECO:0000269" key="4">
    <source>
    </source>
</evidence>
<evidence type="ECO:0000269" key="5">
    <source>
    </source>
</evidence>
<comment type="function">
    <text>Involved in the regulation of secondary metabolism by phosphorylating, on both Ser and Thr, the AfsR global regulatory protein involved in the control of secondary metabolism.</text>
</comment>
<comment type="catalytic activity">
    <reaction>
        <text>L-seryl-[protein] + ATP = O-phospho-L-seryl-[protein] + ADP + H(+)</text>
        <dbReference type="Rhea" id="RHEA:17989"/>
        <dbReference type="Rhea" id="RHEA-COMP:9863"/>
        <dbReference type="Rhea" id="RHEA-COMP:11604"/>
        <dbReference type="ChEBI" id="CHEBI:15378"/>
        <dbReference type="ChEBI" id="CHEBI:29999"/>
        <dbReference type="ChEBI" id="CHEBI:30616"/>
        <dbReference type="ChEBI" id="CHEBI:83421"/>
        <dbReference type="ChEBI" id="CHEBI:456216"/>
        <dbReference type="EC" id="2.7.11.1"/>
    </reaction>
</comment>
<comment type="catalytic activity">
    <reaction>
        <text>L-threonyl-[protein] + ATP = O-phospho-L-threonyl-[protein] + ADP + H(+)</text>
        <dbReference type="Rhea" id="RHEA:46608"/>
        <dbReference type="Rhea" id="RHEA-COMP:11060"/>
        <dbReference type="Rhea" id="RHEA-COMP:11605"/>
        <dbReference type="ChEBI" id="CHEBI:15378"/>
        <dbReference type="ChEBI" id="CHEBI:30013"/>
        <dbReference type="ChEBI" id="CHEBI:30616"/>
        <dbReference type="ChEBI" id="CHEBI:61977"/>
        <dbReference type="ChEBI" id="CHEBI:456216"/>
        <dbReference type="EC" id="2.7.11.1"/>
    </reaction>
</comment>
<comment type="subunit">
    <text evidence="4">Interacts (via the N-terminal kinase domain) with KbpA; the interaction prevents autophosphorylation of AfsK.</text>
</comment>
<comment type="PTM">
    <text evidence="5">Autophosphorylated mainly on threonine residues. Some phosphorylation on serine residues. Autophosphorylation on Thr-168 is the major site enhancing kinase activity towards AfsR, and is regulated though interaction with KbpA.</text>
</comment>
<comment type="similarity">
    <text evidence="1">Belongs to the protein kinase superfamily. Ser/Thr protein kinase family.</text>
</comment>